<dbReference type="EC" id="2.7.7.38" evidence="1"/>
<dbReference type="EMBL" id="AM233362">
    <property type="protein sequence ID" value="CAJ79838.1"/>
    <property type="molecule type" value="Genomic_DNA"/>
</dbReference>
<dbReference type="RefSeq" id="WP_003016657.1">
    <property type="nucleotide sequence ID" value="NZ_CP009694.1"/>
</dbReference>
<dbReference type="SMR" id="Q2A2J8"/>
<dbReference type="KEGG" id="ftl:FTL_1399"/>
<dbReference type="UniPathway" id="UPA00030"/>
<dbReference type="UniPathway" id="UPA00358">
    <property type="reaction ID" value="UER00476"/>
</dbReference>
<dbReference type="Proteomes" id="UP000001944">
    <property type="component" value="Chromosome"/>
</dbReference>
<dbReference type="GO" id="GO:0005829">
    <property type="term" value="C:cytosol"/>
    <property type="evidence" value="ECO:0007669"/>
    <property type="project" value="TreeGrafter"/>
</dbReference>
<dbReference type="GO" id="GO:0008690">
    <property type="term" value="F:3-deoxy-manno-octulosonate cytidylyltransferase activity"/>
    <property type="evidence" value="ECO:0007669"/>
    <property type="project" value="UniProtKB-UniRule"/>
</dbReference>
<dbReference type="GO" id="GO:0033468">
    <property type="term" value="P:CMP-keto-3-deoxy-D-manno-octulosonic acid biosynthetic process"/>
    <property type="evidence" value="ECO:0007669"/>
    <property type="project" value="UniProtKB-UniRule"/>
</dbReference>
<dbReference type="GO" id="GO:0009103">
    <property type="term" value="P:lipopolysaccharide biosynthetic process"/>
    <property type="evidence" value="ECO:0007669"/>
    <property type="project" value="UniProtKB-UniRule"/>
</dbReference>
<dbReference type="CDD" id="cd02517">
    <property type="entry name" value="CMP-KDO-Synthetase"/>
    <property type="match status" value="1"/>
</dbReference>
<dbReference type="FunFam" id="3.90.550.10:FF:000011">
    <property type="entry name" value="3-deoxy-manno-octulosonate cytidylyltransferase"/>
    <property type="match status" value="1"/>
</dbReference>
<dbReference type="Gene3D" id="3.90.550.10">
    <property type="entry name" value="Spore Coat Polysaccharide Biosynthesis Protein SpsA, Chain A"/>
    <property type="match status" value="1"/>
</dbReference>
<dbReference type="HAMAP" id="MF_00057">
    <property type="entry name" value="KdsB"/>
    <property type="match status" value="1"/>
</dbReference>
<dbReference type="InterPro" id="IPR003329">
    <property type="entry name" value="Cytidylyl_trans"/>
</dbReference>
<dbReference type="InterPro" id="IPR004528">
    <property type="entry name" value="KdsB"/>
</dbReference>
<dbReference type="InterPro" id="IPR029044">
    <property type="entry name" value="Nucleotide-diphossugar_trans"/>
</dbReference>
<dbReference type="NCBIfam" id="TIGR00466">
    <property type="entry name" value="kdsB"/>
    <property type="match status" value="1"/>
</dbReference>
<dbReference type="NCBIfam" id="NF003950">
    <property type="entry name" value="PRK05450.1-3"/>
    <property type="match status" value="1"/>
</dbReference>
<dbReference type="NCBIfam" id="NF003952">
    <property type="entry name" value="PRK05450.1-5"/>
    <property type="match status" value="1"/>
</dbReference>
<dbReference type="NCBIfam" id="NF009905">
    <property type="entry name" value="PRK13368.1"/>
    <property type="match status" value="1"/>
</dbReference>
<dbReference type="PANTHER" id="PTHR42866">
    <property type="entry name" value="3-DEOXY-MANNO-OCTULOSONATE CYTIDYLYLTRANSFERASE"/>
    <property type="match status" value="1"/>
</dbReference>
<dbReference type="PANTHER" id="PTHR42866:SF2">
    <property type="entry name" value="3-DEOXY-MANNO-OCTULOSONATE CYTIDYLYLTRANSFERASE, MITOCHONDRIAL"/>
    <property type="match status" value="1"/>
</dbReference>
<dbReference type="Pfam" id="PF02348">
    <property type="entry name" value="CTP_transf_3"/>
    <property type="match status" value="1"/>
</dbReference>
<dbReference type="SUPFAM" id="SSF53448">
    <property type="entry name" value="Nucleotide-diphospho-sugar transferases"/>
    <property type="match status" value="1"/>
</dbReference>
<keyword id="KW-0963">Cytoplasm</keyword>
<keyword id="KW-0448">Lipopolysaccharide biosynthesis</keyword>
<keyword id="KW-0548">Nucleotidyltransferase</keyword>
<keyword id="KW-1185">Reference proteome</keyword>
<keyword id="KW-0808">Transferase</keyword>
<proteinExistence type="inferred from homology"/>
<evidence type="ECO:0000255" key="1">
    <source>
        <dbReference type="HAMAP-Rule" id="MF_00057"/>
    </source>
</evidence>
<comment type="function">
    <text evidence="1">Activates KDO (a required 8-carbon sugar) for incorporation into bacterial lipopolysaccharide in Gram-negative bacteria.</text>
</comment>
<comment type="catalytic activity">
    <reaction evidence="1">
        <text>3-deoxy-alpha-D-manno-oct-2-ulosonate + CTP = CMP-3-deoxy-beta-D-manno-octulosonate + diphosphate</text>
        <dbReference type="Rhea" id="RHEA:23448"/>
        <dbReference type="ChEBI" id="CHEBI:33019"/>
        <dbReference type="ChEBI" id="CHEBI:37563"/>
        <dbReference type="ChEBI" id="CHEBI:85986"/>
        <dbReference type="ChEBI" id="CHEBI:85987"/>
        <dbReference type="EC" id="2.7.7.38"/>
    </reaction>
</comment>
<comment type="pathway">
    <text evidence="1">Nucleotide-sugar biosynthesis; CMP-3-deoxy-D-manno-octulosonate biosynthesis; CMP-3-deoxy-D-manno-octulosonate from 3-deoxy-D-manno-octulosonate and CTP: step 1/1.</text>
</comment>
<comment type="pathway">
    <text evidence="1">Bacterial outer membrane biogenesis; lipopolysaccharide biosynthesis.</text>
</comment>
<comment type="subcellular location">
    <subcellularLocation>
        <location evidence="1">Cytoplasm</location>
    </subcellularLocation>
</comment>
<comment type="similarity">
    <text evidence="1">Belongs to the KdsB family.</text>
</comment>
<feature type="chain" id="PRO_0000370067" description="3-deoxy-manno-octulosonate cytidylyltransferase">
    <location>
        <begin position="1"/>
        <end position="250"/>
    </location>
</feature>
<protein>
    <recommendedName>
        <fullName evidence="1">3-deoxy-manno-octulosonate cytidylyltransferase</fullName>
        <ecNumber evidence="1">2.7.7.38</ecNumber>
    </recommendedName>
    <alternativeName>
        <fullName evidence="1">CMP-2-keto-3-deoxyoctulosonic acid synthase</fullName>
        <shortName evidence="1">CKS</shortName>
        <shortName evidence="1">CMP-KDO synthase</shortName>
    </alternativeName>
</protein>
<reference key="1">
    <citation type="submission" date="2006-03" db="EMBL/GenBank/DDBJ databases">
        <title>Complete genome sequence of Francisella tularensis LVS (Live Vaccine Strain).</title>
        <authorList>
            <person name="Chain P."/>
            <person name="Larimer F."/>
            <person name="Land M."/>
            <person name="Stilwagen S."/>
            <person name="Larsson P."/>
            <person name="Bearden S."/>
            <person name="Chu M."/>
            <person name="Oyston P."/>
            <person name="Forsman M."/>
            <person name="Andersson S."/>
            <person name="Lindler L."/>
            <person name="Titball R."/>
            <person name="Garcia E."/>
        </authorList>
    </citation>
    <scope>NUCLEOTIDE SEQUENCE [LARGE SCALE GENOMIC DNA]</scope>
    <source>
        <strain>LVS</strain>
    </source>
</reference>
<accession>Q2A2J8</accession>
<gene>
    <name evidence="1" type="primary">kdsB</name>
    <name type="ordered locus">FTL_1399</name>
</gene>
<organism>
    <name type="scientific">Francisella tularensis subsp. holarctica (strain LVS)</name>
    <dbReference type="NCBI Taxonomy" id="376619"/>
    <lineage>
        <taxon>Bacteria</taxon>
        <taxon>Pseudomonadati</taxon>
        <taxon>Pseudomonadota</taxon>
        <taxon>Gammaproteobacteria</taxon>
        <taxon>Thiotrichales</taxon>
        <taxon>Francisellaceae</taxon>
        <taxon>Francisella</taxon>
    </lineage>
</organism>
<sequence>MANIHIVIPARLKSTRLPNKMLADIAGKPMIQRVYEQVTKSKFDSIIIATDSQKIKDIAESFGAKVVLTRDDHQSGTDRIAEAVTKLGFAYEDIVVNVQGDEPLIPIENIEQAAQLLIDKSEAVVSTLCEKITDVEDIYNPNNVKVVFDKNNYALYFSRASIPFERGFSEKEQINISEFFRHIGIYAYRVAFLKHYAELTVSPIEKYEALEQLRVLYNGYKIAIEQSAKSTPAGVDTLQDLEKVRKLFNV</sequence>
<name>KDSB_FRATH</name>